<proteinExistence type="inferred from homology"/>
<keyword id="KW-0342">GTP-binding</keyword>
<keyword id="KW-0378">Hydrolase</keyword>
<keyword id="KW-0456">Lyase</keyword>
<keyword id="KW-0460">Magnesium</keyword>
<keyword id="KW-0464">Manganese</keyword>
<keyword id="KW-0479">Metal-binding</keyword>
<keyword id="KW-0511">Multifunctional enzyme</keyword>
<keyword id="KW-0547">Nucleotide-binding</keyword>
<keyword id="KW-1185">Reference proteome</keyword>
<keyword id="KW-0686">Riboflavin biosynthesis</keyword>
<keyword id="KW-0862">Zinc</keyword>
<organism>
    <name type="scientific">Bacillus subtilis (strain 168)</name>
    <dbReference type="NCBI Taxonomy" id="224308"/>
    <lineage>
        <taxon>Bacteria</taxon>
        <taxon>Bacillati</taxon>
        <taxon>Bacillota</taxon>
        <taxon>Bacilli</taxon>
        <taxon>Bacillales</taxon>
        <taxon>Bacillaceae</taxon>
        <taxon>Bacillus</taxon>
    </lineage>
</organism>
<name>RIBBA_BACSU</name>
<dbReference type="EC" id="4.1.99.12" evidence="1"/>
<dbReference type="EC" id="3.5.4.25" evidence="1"/>
<dbReference type="EMBL" id="L09228">
    <property type="protein sequence ID" value="AAA67483.1"/>
    <property type="molecule type" value="Genomic_DNA"/>
</dbReference>
<dbReference type="EMBL" id="X51510">
    <property type="protein sequence ID" value="CAA35880.1"/>
    <property type="molecule type" value="Genomic_DNA"/>
</dbReference>
<dbReference type="EMBL" id="AL009126">
    <property type="protein sequence ID" value="CAB14258.1"/>
    <property type="molecule type" value="Genomic_DNA"/>
</dbReference>
<dbReference type="PIR" id="S45545">
    <property type="entry name" value="S45545"/>
</dbReference>
<dbReference type="RefSeq" id="NP_390207.1">
    <property type="nucleotide sequence ID" value="NC_000964.3"/>
</dbReference>
<dbReference type="RefSeq" id="WP_004398484.1">
    <property type="nucleotide sequence ID" value="NZ_OZ025638.1"/>
</dbReference>
<dbReference type="SMR" id="P17620"/>
<dbReference type="FunCoup" id="P17620">
    <property type="interactions" value="467"/>
</dbReference>
<dbReference type="IntAct" id="P17620">
    <property type="interactions" value="1"/>
</dbReference>
<dbReference type="MINT" id="P17620"/>
<dbReference type="STRING" id="224308.BSU23260"/>
<dbReference type="PaxDb" id="224308-BSU23260"/>
<dbReference type="DNASU" id="938946"/>
<dbReference type="EnsemblBacteria" id="CAB14258">
    <property type="protein sequence ID" value="CAB14258"/>
    <property type="gene ID" value="BSU_23260"/>
</dbReference>
<dbReference type="GeneID" id="938946"/>
<dbReference type="KEGG" id="bsu:BSU23260"/>
<dbReference type="PATRIC" id="fig|224308.179.peg.2533"/>
<dbReference type="eggNOG" id="COG0108">
    <property type="taxonomic scope" value="Bacteria"/>
</dbReference>
<dbReference type="eggNOG" id="COG0807">
    <property type="taxonomic scope" value="Bacteria"/>
</dbReference>
<dbReference type="InParanoid" id="P17620"/>
<dbReference type="OrthoDB" id="9793111at2"/>
<dbReference type="PhylomeDB" id="P17620"/>
<dbReference type="BioCyc" id="BSUB:BSU23260-MONOMER"/>
<dbReference type="UniPathway" id="UPA00275">
    <property type="reaction ID" value="UER00399"/>
</dbReference>
<dbReference type="UniPathway" id="UPA00275">
    <property type="reaction ID" value="UER00400"/>
</dbReference>
<dbReference type="Proteomes" id="UP000001570">
    <property type="component" value="Chromosome"/>
</dbReference>
<dbReference type="GO" id="GO:0005829">
    <property type="term" value="C:cytosol"/>
    <property type="evidence" value="ECO:0000318"/>
    <property type="project" value="GO_Central"/>
</dbReference>
<dbReference type="GO" id="GO:0008686">
    <property type="term" value="F:3,4-dihydroxy-2-butanone-4-phosphate synthase activity"/>
    <property type="evidence" value="ECO:0007669"/>
    <property type="project" value="UniProtKB-UniRule"/>
</dbReference>
<dbReference type="GO" id="GO:0005525">
    <property type="term" value="F:GTP binding"/>
    <property type="evidence" value="ECO:0007669"/>
    <property type="project" value="UniProtKB-KW"/>
</dbReference>
<dbReference type="GO" id="GO:0003935">
    <property type="term" value="F:GTP cyclohydrolase II activity"/>
    <property type="evidence" value="ECO:0000318"/>
    <property type="project" value="GO_Central"/>
</dbReference>
<dbReference type="GO" id="GO:0000287">
    <property type="term" value="F:magnesium ion binding"/>
    <property type="evidence" value="ECO:0007669"/>
    <property type="project" value="UniProtKB-UniRule"/>
</dbReference>
<dbReference type="GO" id="GO:0030145">
    <property type="term" value="F:manganese ion binding"/>
    <property type="evidence" value="ECO:0007669"/>
    <property type="project" value="UniProtKB-UniRule"/>
</dbReference>
<dbReference type="GO" id="GO:0008270">
    <property type="term" value="F:zinc ion binding"/>
    <property type="evidence" value="ECO:0007669"/>
    <property type="project" value="UniProtKB-UniRule"/>
</dbReference>
<dbReference type="GO" id="GO:0009231">
    <property type="term" value="P:riboflavin biosynthetic process"/>
    <property type="evidence" value="ECO:0000318"/>
    <property type="project" value="GO_Central"/>
</dbReference>
<dbReference type="CDD" id="cd00641">
    <property type="entry name" value="GTP_cyclohydro2"/>
    <property type="match status" value="1"/>
</dbReference>
<dbReference type="FunFam" id="3.40.50.10990:FF:000001">
    <property type="entry name" value="Riboflavin biosynthesis protein RibBA"/>
    <property type="match status" value="1"/>
</dbReference>
<dbReference type="FunFam" id="3.90.870.10:FF:000001">
    <property type="entry name" value="Riboflavin biosynthesis protein RibBA"/>
    <property type="match status" value="1"/>
</dbReference>
<dbReference type="Gene3D" id="3.90.870.10">
    <property type="entry name" value="DHBP synthase"/>
    <property type="match status" value="1"/>
</dbReference>
<dbReference type="Gene3D" id="3.40.50.10990">
    <property type="entry name" value="GTP cyclohydrolase II"/>
    <property type="match status" value="1"/>
</dbReference>
<dbReference type="HAMAP" id="MF_00179">
    <property type="entry name" value="RibA"/>
    <property type="match status" value="1"/>
</dbReference>
<dbReference type="HAMAP" id="MF_00180">
    <property type="entry name" value="RibB"/>
    <property type="match status" value="1"/>
</dbReference>
<dbReference type="HAMAP" id="MF_01283">
    <property type="entry name" value="RibBA"/>
    <property type="match status" value="1"/>
</dbReference>
<dbReference type="InterPro" id="IPR017945">
    <property type="entry name" value="DHBP_synth_RibB-like_a/b_dom"/>
</dbReference>
<dbReference type="InterPro" id="IPR000422">
    <property type="entry name" value="DHBP_synthase_RibB"/>
</dbReference>
<dbReference type="InterPro" id="IPR032677">
    <property type="entry name" value="GTP_cyclohydro_II"/>
</dbReference>
<dbReference type="InterPro" id="IPR000926">
    <property type="entry name" value="RibA"/>
</dbReference>
<dbReference type="InterPro" id="IPR036144">
    <property type="entry name" value="RibA-like_sf"/>
</dbReference>
<dbReference type="InterPro" id="IPR016299">
    <property type="entry name" value="Riboflavin_synth_RibBA"/>
</dbReference>
<dbReference type="NCBIfam" id="NF001591">
    <property type="entry name" value="PRK00393.1"/>
    <property type="match status" value="1"/>
</dbReference>
<dbReference type="NCBIfam" id="NF006803">
    <property type="entry name" value="PRK09311.1"/>
    <property type="match status" value="1"/>
</dbReference>
<dbReference type="NCBIfam" id="TIGR00505">
    <property type="entry name" value="ribA"/>
    <property type="match status" value="1"/>
</dbReference>
<dbReference type="NCBIfam" id="TIGR00506">
    <property type="entry name" value="ribB"/>
    <property type="match status" value="1"/>
</dbReference>
<dbReference type="PANTHER" id="PTHR21327:SF18">
    <property type="entry name" value="3,4-DIHYDROXY-2-BUTANONE 4-PHOSPHATE SYNTHASE"/>
    <property type="match status" value="1"/>
</dbReference>
<dbReference type="PANTHER" id="PTHR21327">
    <property type="entry name" value="GTP CYCLOHYDROLASE II-RELATED"/>
    <property type="match status" value="1"/>
</dbReference>
<dbReference type="Pfam" id="PF00926">
    <property type="entry name" value="DHBP_synthase"/>
    <property type="match status" value="1"/>
</dbReference>
<dbReference type="Pfam" id="PF00925">
    <property type="entry name" value="GTP_cyclohydro2"/>
    <property type="match status" value="1"/>
</dbReference>
<dbReference type="PIRSF" id="PIRSF001259">
    <property type="entry name" value="RibA"/>
    <property type="match status" value="1"/>
</dbReference>
<dbReference type="SUPFAM" id="SSF142695">
    <property type="entry name" value="RibA-like"/>
    <property type="match status" value="1"/>
</dbReference>
<dbReference type="SUPFAM" id="SSF55821">
    <property type="entry name" value="YrdC/RibB"/>
    <property type="match status" value="1"/>
</dbReference>
<reference key="1">
    <citation type="journal article" date="1993" name="Mol. Microbiol.">
        <title>The organization of the Bacillus subtilis 168 chromosome region between the spoVA and serA genetic loci, based on sequence data.</title>
        <authorList>
            <person name="Sorokin A.V."/>
            <person name="Zumstein E."/>
            <person name="Azevedo V."/>
            <person name="Ehrlich S.D."/>
            <person name="Serror P."/>
        </authorList>
    </citation>
    <scope>NUCLEOTIDE SEQUENCE [GENOMIC DNA]</scope>
    <source>
        <strain>168 / Marburg / ATCC 6051 / DSM 10 / JCM 1465 / NBRC 13719 / NCIMB 3610 / NRRL NRS-744 / VKM B-501</strain>
    </source>
</reference>
<reference key="2">
    <citation type="thesis" date="1989" institute="USSR Academy of Sciences" country="Russia">
        <authorList>
            <person name="Mironov V.N."/>
        </authorList>
    </citation>
    <scope>NUCLEOTIDE SEQUENCE [GENOMIC DNA]</scope>
    <source>
        <strain>168 / SHGW</strain>
    </source>
</reference>
<reference key="3">
    <citation type="journal article" date="1997" name="Nature">
        <title>The complete genome sequence of the Gram-positive bacterium Bacillus subtilis.</title>
        <authorList>
            <person name="Kunst F."/>
            <person name="Ogasawara N."/>
            <person name="Moszer I."/>
            <person name="Albertini A.M."/>
            <person name="Alloni G."/>
            <person name="Azevedo V."/>
            <person name="Bertero M.G."/>
            <person name="Bessieres P."/>
            <person name="Bolotin A."/>
            <person name="Borchert S."/>
            <person name="Borriss R."/>
            <person name="Boursier L."/>
            <person name="Brans A."/>
            <person name="Braun M."/>
            <person name="Brignell S.C."/>
            <person name="Bron S."/>
            <person name="Brouillet S."/>
            <person name="Bruschi C.V."/>
            <person name="Caldwell B."/>
            <person name="Capuano V."/>
            <person name="Carter N.M."/>
            <person name="Choi S.-K."/>
            <person name="Codani J.-J."/>
            <person name="Connerton I.F."/>
            <person name="Cummings N.J."/>
            <person name="Daniel R.A."/>
            <person name="Denizot F."/>
            <person name="Devine K.M."/>
            <person name="Duesterhoeft A."/>
            <person name="Ehrlich S.D."/>
            <person name="Emmerson P.T."/>
            <person name="Entian K.-D."/>
            <person name="Errington J."/>
            <person name="Fabret C."/>
            <person name="Ferrari E."/>
            <person name="Foulger D."/>
            <person name="Fritz C."/>
            <person name="Fujita M."/>
            <person name="Fujita Y."/>
            <person name="Fuma S."/>
            <person name="Galizzi A."/>
            <person name="Galleron N."/>
            <person name="Ghim S.-Y."/>
            <person name="Glaser P."/>
            <person name="Goffeau A."/>
            <person name="Golightly E.J."/>
            <person name="Grandi G."/>
            <person name="Guiseppi G."/>
            <person name="Guy B.J."/>
            <person name="Haga K."/>
            <person name="Haiech J."/>
            <person name="Harwood C.R."/>
            <person name="Henaut A."/>
            <person name="Hilbert H."/>
            <person name="Holsappel S."/>
            <person name="Hosono S."/>
            <person name="Hullo M.-F."/>
            <person name="Itaya M."/>
            <person name="Jones L.-M."/>
            <person name="Joris B."/>
            <person name="Karamata D."/>
            <person name="Kasahara Y."/>
            <person name="Klaerr-Blanchard M."/>
            <person name="Klein C."/>
            <person name="Kobayashi Y."/>
            <person name="Koetter P."/>
            <person name="Koningstein G."/>
            <person name="Krogh S."/>
            <person name="Kumano M."/>
            <person name="Kurita K."/>
            <person name="Lapidus A."/>
            <person name="Lardinois S."/>
            <person name="Lauber J."/>
            <person name="Lazarevic V."/>
            <person name="Lee S.-M."/>
            <person name="Levine A."/>
            <person name="Liu H."/>
            <person name="Masuda S."/>
            <person name="Mauel C."/>
            <person name="Medigue C."/>
            <person name="Medina N."/>
            <person name="Mellado R.P."/>
            <person name="Mizuno M."/>
            <person name="Moestl D."/>
            <person name="Nakai S."/>
            <person name="Noback M."/>
            <person name="Noone D."/>
            <person name="O'Reilly M."/>
            <person name="Ogawa K."/>
            <person name="Ogiwara A."/>
            <person name="Oudega B."/>
            <person name="Park S.-H."/>
            <person name="Parro V."/>
            <person name="Pohl T.M."/>
            <person name="Portetelle D."/>
            <person name="Porwollik S."/>
            <person name="Prescott A.M."/>
            <person name="Presecan E."/>
            <person name="Pujic P."/>
            <person name="Purnelle B."/>
            <person name="Rapoport G."/>
            <person name="Rey M."/>
            <person name="Reynolds S."/>
            <person name="Rieger M."/>
            <person name="Rivolta C."/>
            <person name="Rocha E."/>
            <person name="Roche B."/>
            <person name="Rose M."/>
            <person name="Sadaie Y."/>
            <person name="Sato T."/>
            <person name="Scanlan E."/>
            <person name="Schleich S."/>
            <person name="Schroeter R."/>
            <person name="Scoffone F."/>
            <person name="Sekiguchi J."/>
            <person name="Sekowska A."/>
            <person name="Seror S.J."/>
            <person name="Serror P."/>
            <person name="Shin B.-S."/>
            <person name="Soldo B."/>
            <person name="Sorokin A."/>
            <person name="Tacconi E."/>
            <person name="Takagi T."/>
            <person name="Takahashi H."/>
            <person name="Takemaru K."/>
            <person name="Takeuchi M."/>
            <person name="Tamakoshi A."/>
            <person name="Tanaka T."/>
            <person name="Terpstra P."/>
            <person name="Tognoni A."/>
            <person name="Tosato V."/>
            <person name="Uchiyama S."/>
            <person name="Vandenbol M."/>
            <person name="Vannier F."/>
            <person name="Vassarotti A."/>
            <person name="Viari A."/>
            <person name="Wambutt R."/>
            <person name="Wedler E."/>
            <person name="Wedler H."/>
            <person name="Weitzenegger T."/>
            <person name="Winters P."/>
            <person name="Wipat A."/>
            <person name="Yamamoto H."/>
            <person name="Yamane K."/>
            <person name="Yasumoto K."/>
            <person name="Yata K."/>
            <person name="Yoshida K."/>
            <person name="Yoshikawa H.-F."/>
            <person name="Zumstein E."/>
            <person name="Yoshikawa H."/>
            <person name="Danchin A."/>
        </authorList>
    </citation>
    <scope>NUCLEOTIDE SEQUENCE [LARGE SCALE GENOMIC DNA]</scope>
    <source>
        <strain>168</strain>
    </source>
</reference>
<gene>
    <name evidence="1" type="primary">ribBA</name>
    <name type="synonym">ribA</name>
    <name type="ordered locus">BSU23260</name>
</gene>
<accession>P17620</accession>
<comment type="function">
    <text evidence="1">Catalyzes the conversion of D-ribulose 5-phosphate to formate and 3,4-dihydroxy-2-butanone 4-phosphate.</text>
</comment>
<comment type="function">
    <text evidence="1">Catalyzes the conversion of GTP to 2,5-diamino-6-ribosylamino-4(3H)-pyrimidinone 5'-phosphate (DARP), formate and pyrophosphate.</text>
</comment>
<comment type="catalytic activity">
    <reaction evidence="1">
        <text>D-ribulose 5-phosphate = (2S)-2-hydroxy-3-oxobutyl phosphate + formate + H(+)</text>
        <dbReference type="Rhea" id="RHEA:18457"/>
        <dbReference type="ChEBI" id="CHEBI:15378"/>
        <dbReference type="ChEBI" id="CHEBI:15740"/>
        <dbReference type="ChEBI" id="CHEBI:58121"/>
        <dbReference type="ChEBI" id="CHEBI:58830"/>
        <dbReference type="EC" id="4.1.99.12"/>
    </reaction>
</comment>
<comment type="catalytic activity">
    <reaction evidence="1">
        <text>GTP + 4 H2O = 2,5-diamino-6-hydroxy-4-(5-phosphoribosylamino)-pyrimidine + formate + 2 phosphate + 3 H(+)</text>
        <dbReference type="Rhea" id="RHEA:23704"/>
        <dbReference type="ChEBI" id="CHEBI:15377"/>
        <dbReference type="ChEBI" id="CHEBI:15378"/>
        <dbReference type="ChEBI" id="CHEBI:15740"/>
        <dbReference type="ChEBI" id="CHEBI:37565"/>
        <dbReference type="ChEBI" id="CHEBI:43474"/>
        <dbReference type="ChEBI" id="CHEBI:58614"/>
        <dbReference type="EC" id="3.5.4.25"/>
    </reaction>
</comment>
<comment type="cofactor">
    <cofactor evidence="1">
        <name>Mg(2+)</name>
        <dbReference type="ChEBI" id="CHEBI:18420"/>
    </cofactor>
    <cofactor evidence="1">
        <name>Mn(2+)</name>
        <dbReference type="ChEBI" id="CHEBI:29035"/>
    </cofactor>
    <text evidence="1">Binds 2 divalent metal cations per subunit. Magnesium or manganese.</text>
</comment>
<comment type="cofactor">
    <cofactor evidence="1">
        <name>Zn(2+)</name>
        <dbReference type="ChEBI" id="CHEBI:29105"/>
    </cofactor>
    <text evidence="1">Binds 1 zinc ion per subunit.</text>
</comment>
<comment type="pathway">
    <text evidence="1">Cofactor biosynthesis; riboflavin biosynthesis; 2-hydroxy-3-oxobutyl phosphate from D-ribulose 5-phosphate: step 1/1.</text>
</comment>
<comment type="pathway">
    <text evidence="1">Cofactor biosynthesis; riboflavin biosynthesis; 5-amino-6-(D-ribitylamino)uracil from GTP: step 1/4.</text>
</comment>
<comment type="similarity">
    <text evidence="1">In the N-terminal section; belongs to the DHBP synthase family.</text>
</comment>
<comment type="similarity">
    <text evidence="1">In the C-terminal section; belongs to the GTP cyclohydrolase II family.</text>
</comment>
<protein>
    <recommendedName>
        <fullName evidence="1">Riboflavin biosynthesis protein RibBA</fullName>
    </recommendedName>
    <domain>
        <recommendedName>
            <fullName evidence="1">3,4-dihydroxy-2-butanone 4-phosphate synthase</fullName>
            <shortName evidence="1">DHBP synthase</shortName>
            <ecNumber evidence="1">4.1.99.12</ecNumber>
        </recommendedName>
    </domain>
    <domain>
        <recommendedName>
            <fullName evidence="1">GTP cyclohydrolase-2</fullName>
            <ecNumber evidence="1">3.5.4.25</ecNumber>
        </recommendedName>
        <alternativeName>
            <fullName evidence="1">GTP cyclohydrolase II</fullName>
        </alternativeName>
    </domain>
</protein>
<sequence length="398" mass="44121">MFHPIEEALDALKKGEVIIVVDDEDRENEGDFVALAEHATPEVINFMATHGRGLICTPLSEEIADRLDLHPMVEHNTDSHHTAFTVSIDHRETKTGISAQERSFTVQALLDSKSVPSDFQRPGHIFPLIAKKGGVLKRAGHTEAAVDLAEACGSPGAGVICEIMNEDGTMARVPELIEIAKKHQLKMITIKDLIQYRYNLTTLVEREVDITLPTDFGTFKVYGYTNEVDGKEHVAFVMGDVPFGEEPVLVRVHSECLTGDVFGSHRCDCGPQLHAALNQIAAEGRGVLLYLRQEGRGIGLINKLKAYKLQEQGYDTVEANEALGFLPDLRNYGIGAQILRDLGVRNMKLLTNNPRKIAGLEGYGLSISERVPLQMEAKEHNKKYLQTKMNKLGHLLHF</sequence>
<evidence type="ECO:0000255" key="1">
    <source>
        <dbReference type="HAMAP-Rule" id="MF_01283"/>
    </source>
</evidence>
<feature type="chain" id="PRO_0000151721" description="Riboflavin biosynthesis protein RibBA">
    <location>
        <begin position="1"/>
        <end position="398"/>
    </location>
</feature>
<feature type="region of interest" description="DHBP synthase">
    <location>
        <begin position="1"/>
        <end position="199"/>
    </location>
</feature>
<feature type="region of interest" description="GTP cyclohydrolase II">
    <location>
        <begin position="200"/>
        <end position="398"/>
    </location>
</feature>
<feature type="active site" description="Proton acceptor; for GTP cyclohydrolase activity" evidence="1">
    <location>
        <position position="328"/>
    </location>
</feature>
<feature type="active site" description="Nucleophile; for GTP cyclohydrolase activity" evidence="1">
    <location>
        <position position="330"/>
    </location>
</feature>
<feature type="binding site" evidence="1">
    <location>
        <begin position="26"/>
        <end position="27"/>
    </location>
    <ligand>
        <name>D-ribulose 5-phosphate</name>
        <dbReference type="ChEBI" id="CHEBI:58121"/>
    </ligand>
</feature>
<feature type="binding site" evidence="1">
    <location>
        <position position="27"/>
    </location>
    <ligand>
        <name>Mg(2+)</name>
        <dbReference type="ChEBI" id="CHEBI:18420"/>
        <label>1</label>
    </ligand>
</feature>
<feature type="binding site" evidence="1">
    <location>
        <position position="27"/>
    </location>
    <ligand>
        <name>Mg(2+)</name>
        <dbReference type="ChEBI" id="CHEBI:18420"/>
        <label>2</label>
    </ligand>
</feature>
<feature type="binding site" evidence="1">
    <location>
        <position position="31"/>
    </location>
    <ligand>
        <name>D-ribulose 5-phosphate</name>
        <dbReference type="ChEBI" id="CHEBI:58121"/>
    </ligand>
</feature>
<feature type="binding site" evidence="1">
    <location>
        <begin position="138"/>
        <end position="142"/>
    </location>
    <ligand>
        <name>D-ribulose 5-phosphate</name>
        <dbReference type="ChEBI" id="CHEBI:58121"/>
    </ligand>
</feature>
<feature type="binding site" evidence="1">
    <location>
        <position position="141"/>
    </location>
    <ligand>
        <name>Mg(2+)</name>
        <dbReference type="ChEBI" id="CHEBI:18420"/>
        <label>2</label>
    </ligand>
</feature>
<feature type="binding site" evidence="1">
    <location>
        <position position="162"/>
    </location>
    <ligand>
        <name>D-ribulose 5-phosphate</name>
        <dbReference type="ChEBI" id="CHEBI:58121"/>
    </ligand>
</feature>
<feature type="binding site" evidence="1">
    <location>
        <begin position="251"/>
        <end position="255"/>
    </location>
    <ligand>
        <name>GTP</name>
        <dbReference type="ChEBI" id="CHEBI:37565"/>
    </ligand>
</feature>
<feature type="binding site" evidence="1">
    <location>
        <position position="256"/>
    </location>
    <ligand>
        <name>Zn(2+)</name>
        <dbReference type="ChEBI" id="CHEBI:29105"/>
        <note>catalytic</note>
    </ligand>
</feature>
<feature type="binding site" evidence="1">
    <location>
        <position position="267"/>
    </location>
    <ligand>
        <name>Zn(2+)</name>
        <dbReference type="ChEBI" id="CHEBI:29105"/>
        <note>catalytic</note>
    </ligand>
</feature>
<feature type="binding site" evidence="1">
    <location>
        <position position="269"/>
    </location>
    <ligand>
        <name>Zn(2+)</name>
        <dbReference type="ChEBI" id="CHEBI:29105"/>
        <note>catalytic</note>
    </ligand>
</feature>
<feature type="binding site" evidence="1">
    <location>
        <position position="272"/>
    </location>
    <ligand>
        <name>GTP</name>
        <dbReference type="ChEBI" id="CHEBI:37565"/>
    </ligand>
</feature>
<feature type="binding site" evidence="1">
    <location>
        <begin position="294"/>
        <end position="296"/>
    </location>
    <ligand>
        <name>GTP</name>
        <dbReference type="ChEBI" id="CHEBI:37565"/>
    </ligand>
</feature>
<feature type="binding site" evidence="1">
    <location>
        <position position="316"/>
    </location>
    <ligand>
        <name>GTP</name>
        <dbReference type="ChEBI" id="CHEBI:37565"/>
    </ligand>
</feature>
<feature type="binding site" evidence="1">
    <location>
        <position position="351"/>
    </location>
    <ligand>
        <name>GTP</name>
        <dbReference type="ChEBI" id="CHEBI:37565"/>
    </ligand>
</feature>
<feature type="binding site" evidence="1">
    <location>
        <position position="356"/>
    </location>
    <ligand>
        <name>GTP</name>
        <dbReference type="ChEBI" id="CHEBI:37565"/>
    </ligand>
</feature>
<feature type="site" description="Essential for DHBP synthase activity" evidence="1">
    <location>
        <position position="124"/>
    </location>
</feature>
<feature type="site" description="Essential for DHBP synthase activity" evidence="1">
    <location>
        <position position="162"/>
    </location>
</feature>